<feature type="chain" id="PRO_1000142140" description="Large ribosomal subunit protein uL4">
    <location>
        <begin position="1"/>
        <end position="207"/>
    </location>
</feature>
<feature type="region of interest" description="Disordered" evidence="2">
    <location>
        <begin position="52"/>
        <end position="75"/>
    </location>
</feature>
<feature type="compositionally biased region" description="Basic residues" evidence="2">
    <location>
        <begin position="60"/>
        <end position="71"/>
    </location>
</feature>
<dbReference type="EMBL" id="AP008937">
    <property type="protein sequence ID" value="BAG27850.1"/>
    <property type="molecule type" value="Genomic_DNA"/>
</dbReference>
<dbReference type="RefSeq" id="WP_003681573.1">
    <property type="nucleotide sequence ID" value="NC_010610.1"/>
</dbReference>
<dbReference type="SMR" id="B2GDW8"/>
<dbReference type="GeneID" id="83716109"/>
<dbReference type="KEGG" id="lfe:LAF_1514"/>
<dbReference type="eggNOG" id="COG0088">
    <property type="taxonomic scope" value="Bacteria"/>
</dbReference>
<dbReference type="HOGENOM" id="CLU_041575_5_2_9"/>
<dbReference type="Proteomes" id="UP000001697">
    <property type="component" value="Chromosome"/>
</dbReference>
<dbReference type="GO" id="GO:1990904">
    <property type="term" value="C:ribonucleoprotein complex"/>
    <property type="evidence" value="ECO:0007669"/>
    <property type="project" value="UniProtKB-KW"/>
</dbReference>
<dbReference type="GO" id="GO:0005840">
    <property type="term" value="C:ribosome"/>
    <property type="evidence" value="ECO:0007669"/>
    <property type="project" value="UniProtKB-KW"/>
</dbReference>
<dbReference type="GO" id="GO:0019843">
    <property type="term" value="F:rRNA binding"/>
    <property type="evidence" value="ECO:0007669"/>
    <property type="project" value="UniProtKB-UniRule"/>
</dbReference>
<dbReference type="GO" id="GO:0003735">
    <property type="term" value="F:structural constituent of ribosome"/>
    <property type="evidence" value="ECO:0007669"/>
    <property type="project" value="InterPro"/>
</dbReference>
<dbReference type="GO" id="GO:0006412">
    <property type="term" value="P:translation"/>
    <property type="evidence" value="ECO:0007669"/>
    <property type="project" value="UniProtKB-UniRule"/>
</dbReference>
<dbReference type="FunFam" id="3.40.1370.10:FF:000003">
    <property type="entry name" value="50S ribosomal protein L4"/>
    <property type="match status" value="1"/>
</dbReference>
<dbReference type="Gene3D" id="3.40.1370.10">
    <property type="match status" value="1"/>
</dbReference>
<dbReference type="HAMAP" id="MF_01328_B">
    <property type="entry name" value="Ribosomal_uL4_B"/>
    <property type="match status" value="1"/>
</dbReference>
<dbReference type="InterPro" id="IPR002136">
    <property type="entry name" value="Ribosomal_uL4"/>
</dbReference>
<dbReference type="InterPro" id="IPR013005">
    <property type="entry name" value="Ribosomal_uL4-like"/>
</dbReference>
<dbReference type="InterPro" id="IPR023574">
    <property type="entry name" value="Ribosomal_uL4_dom_sf"/>
</dbReference>
<dbReference type="NCBIfam" id="TIGR03953">
    <property type="entry name" value="rplD_bact"/>
    <property type="match status" value="1"/>
</dbReference>
<dbReference type="PANTHER" id="PTHR10746">
    <property type="entry name" value="50S RIBOSOMAL PROTEIN L4"/>
    <property type="match status" value="1"/>
</dbReference>
<dbReference type="PANTHER" id="PTHR10746:SF6">
    <property type="entry name" value="LARGE RIBOSOMAL SUBUNIT PROTEIN UL4M"/>
    <property type="match status" value="1"/>
</dbReference>
<dbReference type="Pfam" id="PF00573">
    <property type="entry name" value="Ribosomal_L4"/>
    <property type="match status" value="1"/>
</dbReference>
<dbReference type="SUPFAM" id="SSF52166">
    <property type="entry name" value="Ribosomal protein L4"/>
    <property type="match status" value="1"/>
</dbReference>
<sequence>MTSVALFKQDGSQNGTVELNDSVFSVEANESAEFDAILRQRASLRQGTHAVKNRSAVRGGGKKPWRQKGTGRARQGSIRAPQFRGGGIVFGPTPRSYNYALPRKVRQLAIKSALSQKVANDKFVVVDGLNFDAPKTKEFAGVMNNLKVSERVLVVVTDEDKNAQLSARNLPKTTVVTPAGVNILNVVDAQKIIITQSALSQVEEVLA</sequence>
<name>RL4_LIMF3</name>
<gene>
    <name evidence="1" type="primary">rplD</name>
    <name type="ordered locus">LAF_1514</name>
</gene>
<protein>
    <recommendedName>
        <fullName evidence="1">Large ribosomal subunit protein uL4</fullName>
    </recommendedName>
    <alternativeName>
        <fullName evidence="3">50S ribosomal protein L4</fullName>
    </alternativeName>
</protein>
<comment type="function">
    <text evidence="1">One of the primary rRNA binding proteins, this protein initially binds near the 5'-end of the 23S rRNA. It is important during the early stages of 50S assembly. It makes multiple contacts with different domains of the 23S rRNA in the assembled 50S subunit and ribosome.</text>
</comment>
<comment type="function">
    <text evidence="1">Forms part of the polypeptide exit tunnel.</text>
</comment>
<comment type="subunit">
    <text evidence="1">Part of the 50S ribosomal subunit.</text>
</comment>
<comment type="similarity">
    <text evidence="1">Belongs to the universal ribosomal protein uL4 family.</text>
</comment>
<accession>B2GDW8</accession>
<keyword id="KW-1185">Reference proteome</keyword>
<keyword id="KW-0687">Ribonucleoprotein</keyword>
<keyword id="KW-0689">Ribosomal protein</keyword>
<keyword id="KW-0694">RNA-binding</keyword>
<keyword id="KW-0699">rRNA-binding</keyword>
<organism>
    <name type="scientific">Limosilactobacillus fermentum (strain NBRC 3956 / LMG 18251)</name>
    <name type="common">Lactobacillus fermentum</name>
    <dbReference type="NCBI Taxonomy" id="334390"/>
    <lineage>
        <taxon>Bacteria</taxon>
        <taxon>Bacillati</taxon>
        <taxon>Bacillota</taxon>
        <taxon>Bacilli</taxon>
        <taxon>Lactobacillales</taxon>
        <taxon>Lactobacillaceae</taxon>
        <taxon>Limosilactobacillus</taxon>
    </lineage>
</organism>
<proteinExistence type="inferred from homology"/>
<evidence type="ECO:0000255" key="1">
    <source>
        <dbReference type="HAMAP-Rule" id="MF_01328"/>
    </source>
</evidence>
<evidence type="ECO:0000256" key="2">
    <source>
        <dbReference type="SAM" id="MobiDB-lite"/>
    </source>
</evidence>
<evidence type="ECO:0000305" key="3"/>
<reference key="1">
    <citation type="journal article" date="2008" name="DNA Res.">
        <title>Comparative genome analysis of Lactobacillus reuteri and Lactobacillus fermentum reveal a genomic island for reuterin and cobalamin production.</title>
        <authorList>
            <person name="Morita H."/>
            <person name="Toh H."/>
            <person name="Fukuda S."/>
            <person name="Horikawa H."/>
            <person name="Oshima K."/>
            <person name="Suzuki T."/>
            <person name="Murakami M."/>
            <person name="Hisamatsu S."/>
            <person name="Kato Y."/>
            <person name="Takizawa T."/>
            <person name="Fukuoka H."/>
            <person name="Yoshimura T."/>
            <person name="Itoh K."/>
            <person name="O'Sullivan D.J."/>
            <person name="McKay L.L."/>
            <person name="Ohno H."/>
            <person name="Kikuchi J."/>
            <person name="Masaoka T."/>
            <person name="Hattori M."/>
        </authorList>
    </citation>
    <scope>NUCLEOTIDE SEQUENCE [LARGE SCALE GENOMIC DNA]</scope>
    <source>
        <strain>NBRC 3956 / LMG 18251</strain>
    </source>
</reference>